<protein>
    <recommendedName>
        <fullName>Hemoglobin subunit alpha-1</fullName>
    </recommendedName>
    <alternativeName>
        <fullName>Alpha-1-globin</fullName>
    </alternativeName>
    <alternativeName>
        <fullName>Hemoglobin alpha-1 chain</fullName>
    </alternativeName>
    <alternativeName>
        <fullName>Hemoglobin alpha-major chain</fullName>
    </alternativeName>
</protein>
<sequence length="142" mass="15658">MKLSADDKHNVKAIWEHVKGHEEAIGAEALCRMFTSLPTTRTYFPTKDIKEGSSFLHSHGKKVMGALSNAVAHIDDIDGALSKLSDKHAEELMVDPANFPKLAHNILVVLGIHLKPHLTYSVHSSVDKFLATVGYVLASKYR</sequence>
<reference key="1">
    <citation type="journal article" date="1988" name="Biol. Chem. Hoppe-Seyler">
        <title>The first sequenced normal hemoglobin lacking histidine in position 146 of the beta-chains. The primary structures of the major and minor hemoglobin components of the great crested newt (Triturus cristatus, Urodela, Amphibia).</title>
        <authorList>
            <person name="Kleinschmidt T."/>
            <person name="Sgouros J.G."/>
            <person name="Braunitzer G."/>
        </authorList>
    </citation>
    <scope>PROTEIN SEQUENCE</scope>
</reference>
<keyword id="KW-0903">Direct protein sequencing</keyword>
<keyword id="KW-0349">Heme</keyword>
<keyword id="KW-0408">Iron</keyword>
<keyword id="KW-0479">Metal-binding</keyword>
<keyword id="KW-0561">Oxygen transport</keyword>
<keyword id="KW-0813">Transport</keyword>
<accession>P10783</accession>
<organism>
    <name type="scientific">Triturus cristatus</name>
    <name type="common">Great crested newt</name>
    <name type="synonym">Warty newt</name>
    <dbReference type="NCBI Taxonomy" id="8323"/>
    <lineage>
        <taxon>Eukaryota</taxon>
        <taxon>Metazoa</taxon>
        <taxon>Chordata</taxon>
        <taxon>Craniata</taxon>
        <taxon>Vertebrata</taxon>
        <taxon>Euteleostomi</taxon>
        <taxon>Amphibia</taxon>
        <taxon>Batrachia</taxon>
        <taxon>Caudata</taxon>
        <taxon>Salamandroidea</taxon>
        <taxon>Salamandridae</taxon>
        <taxon>Pleurodelinae</taxon>
        <taxon>Triturus</taxon>
    </lineage>
</organism>
<dbReference type="PIR" id="S02024">
    <property type="entry name" value="S02024"/>
</dbReference>
<dbReference type="SMR" id="P10783"/>
<dbReference type="GO" id="GO:0072562">
    <property type="term" value="C:blood microparticle"/>
    <property type="evidence" value="ECO:0007669"/>
    <property type="project" value="TreeGrafter"/>
</dbReference>
<dbReference type="GO" id="GO:0031838">
    <property type="term" value="C:haptoglobin-hemoglobin complex"/>
    <property type="evidence" value="ECO:0007669"/>
    <property type="project" value="TreeGrafter"/>
</dbReference>
<dbReference type="GO" id="GO:0005833">
    <property type="term" value="C:hemoglobin complex"/>
    <property type="evidence" value="ECO:0007669"/>
    <property type="project" value="InterPro"/>
</dbReference>
<dbReference type="GO" id="GO:0031720">
    <property type="term" value="F:haptoglobin binding"/>
    <property type="evidence" value="ECO:0007669"/>
    <property type="project" value="TreeGrafter"/>
</dbReference>
<dbReference type="GO" id="GO:0020037">
    <property type="term" value="F:heme binding"/>
    <property type="evidence" value="ECO:0007669"/>
    <property type="project" value="InterPro"/>
</dbReference>
<dbReference type="GO" id="GO:0005506">
    <property type="term" value="F:iron ion binding"/>
    <property type="evidence" value="ECO:0007669"/>
    <property type="project" value="InterPro"/>
</dbReference>
<dbReference type="GO" id="GO:0043177">
    <property type="term" value="F:organic acid binding"/>
    <property type="evidence" value="ECO:0007669"/>
    <property type="project" value="TreeGrafter"/>
</dbReference>
<dbReference type="GO" id="GO:0019825">
    <property type="term" value="F:oxygen binding"/>
    <property type="evidence" value="ECO:0007669"/>
    <property type="project" value="InterPro"/>
</dbReference>
<dbReference type="GO" id="GO:0005344">
    <property type="term" value="F:oxygen carrier activity"/>
    <property type="evidence" value="ECO:0007669"/>
    <property type="project" value="UniProtKB-KW"/>
</dbReference>
<dbReference type="GO" id="GO:0004601">
    <property type="term" value="F:peroxidase activity"/>
    <property type="evidence" value="ECO:0007669"/>
    <property type="project" value="TreeGrafter"/>
</dbReference>
<dbReference type="GO" id="GO:0042744">
    <property type="term" value="P:hydrogen peroxide catabolic process"/>
    <property type="evidence" value="ECO:0007669"/>
    <property type="project" value="TreeGrafter"/>
</dbReference>
<dbReference type="CDD" id="cd08927">
    <property type="entry name" value="Hb-alpha-like"/>
    <property type="match status" value="1"/>
</dbReference>
<dbReference type="FunFam" id="1.10.490.10:FF:000002">
    <property type="entry name" value="Hemoglobin subunit alpha"/>
    <property type="match status" value="1"/>
</dbReference>
<dbReference type="Gene3D" id="1.10.490.10">
    <property type="entry name" value="Globins"/>
    <property type="match status" value="1"/>
</dbReference>
<dbReference type="InterPro" id="IPR000971">
    <property type="entry name" value="Globin"/>
</dbReference>
<dbReference type="InterPro" id="IPR009050">
    <property type="entry name" value="Globin-like_sf"/>
</dbReference>
<dbReference type="InterPro" id="IPR012292">
    <property type="entry name" value="Globin/Proto"/>
</dbReference>
<dbReference type="InterPro" id="IPR002338">
    <property type="entry name" value="Hemoglobin_a-typ"/>
</dbReference>
<dbReference type="InterPro" id="IPR050056">
    <property type="entry name" value="Hemoglobin_oxygen_transport"/>
</dbReference>
<dbReference type="InterPro" id="IPR002339">
    <property type="entry name" value="Hemoglobin_pi"/>
</dbReference>
<dbReference type="PANTHER" id="PTHR11442">
    <property type="entry name" value="HEMOGLOBIN FAMILY MEMBER"/>
    <property type="match status" value="1"/>
</dbReference>
<dbReference type="PANTHER" id="PTHR11442:SF48">
    <property type="entry name" value="HEMOGLOBIN SUBUNIT ALPHA"/>
    <property type="match status" value="1"/>
</dbReference>
<dbReference type="Pfam" id="PF00042">
    <property type="entry name" value="Globin"/>
    <property type="match status" value="1"/>
</dbReference>
<dbReference type="PRINTS" id="PR00612">
    <property type="entry name" value="ALPHAHAEM"/>
</dbReference>
<dbReference type="PRINTS" id="PR00815">
    <property type="entry name" value="PIHAEM"/>
</dbReference>
<dbReference type="SUPFAM" id="SSF46458">
    <property type="entry name" value="Globin-like"/>
    <property type="match status" value="1"/>
</dbReference>
<dbReference type="PROSITE" id="PS01033">
    <property type="entry name" value="GLOBIN"/>
    <property type="match status" value="1"/>
</dbReference>
<comment type="function">
    <text>Involved in oxygen transport from the lung to the various peripheral tissues.</text>
</comment>
<comment type="subunit">
    <text>Major hemoglobin is a heterotetramer of two alpha-1 chains and two beta-1 chains.</text>
</comment>
<comment type="tissue specificity">
    <text>Red blood cells.</text>
</comment>
<comment type="similarity">
    <text evidence="1">Belongs to the globin family.</text>
</comment>
<feature type="chain" id="PRO_0000052789" description="Hemoglobin subunit alpha-1">
    <location>
        <begin position="1"/>
        <end position="142"/>
    </location>
</feature>
<feature type="domain" description="Globin" evidence="1">
    <location>
        <begin position="2"/>
        <end position="142"/>
    </location>
</feature>
<feature type="binding site" evidence="1">
    <location>
        <position position="59"/>
    </location>
    <ligand>
        <name>O2</name>
        <dbReference type="ChEBI" id="CHEBI:15379"/>
    </ligand>
</feature>
<feature type="binding site" description="proximal binding residue" evidence="1">
    <location>
        <position position="88"/>
    </location>
    <ligand>
        <name>heme b</name>
        <dbReference type="ChEBI" id="CHEBI:60344"/>
    </ligand>
    <ligandPart>
        <name>Fe</name>
        <dbReference type="ChEBI" id="CHEBI:18248"/>
    </ligandPart>
</feature>
<proteinExistence type="evidence at protein level"/>
<name>HBA1_TRICR</name>
<evidence type="ECO:0000255" key="1">
    <source>
        <dbReference type="PROSITE-ProRule" id="PRU00238"/>
    </source>
</evidence>